<gene>
    <name evidence="1" type="primary">tmk</name>
    <name type="ordered locus">SAOUHSC_00451</name>
</gene>
<sequence length="205" mass="23425">MSAFITFEGPEGSGKTTVINEVYHRLVKDYDVIMTREPGGVPTGEEIRKIVLEGNDMDIRTEAMLFAASRREHLVLKVIPALKEGKVVLCDRYIDSSLAYQGYARGIGVEEVRALNEFAINGLYPDLTIYLNVSAEVGRERIIKNSRDQNRLDQEDLKFHEKVIEGYQEIIHNESQRFKSVNADQPLENVVEDTYQTIIKYLEKI</sequence>
<comment type="function">
    <text evidence="1">Phosphorylation of dTMP to form dTDP in both de novo and salvage pathways of dTTP synthesis.</text>
</comment>
<comment type="catalytic activity">
    <reaction evidence="1">
        <text>dTMP + ATP = dTDP + ADP</text>
        <dbReference type="Rhea" id="RHEA:13517"/>
        <dbReference type="ChEBI" id="CHEBI:30616"/>
        <dbReference type="ChEBI" id="CHEBI:58369"/>
        <dbReference type="ChEBI" id="CHEBI:63528"/>
        <dbReference type="ChEBI" id="CHEBI:456216"/>
        <dbReference type="EC" id="2.7.4.9"/>
    </reaction>
</comment>
<comment type="similarity">
    <text evidence="1">Belongs to the thymidylate kinase family.</text>
</comment>
<name>KTHY_STAA8</name>
<keyword id="KW-0067">ATP-binding</keyword>
<keyword id="KW-0418">Kinase</keyword>
<keyword id="KW-0545">Nucleotide biosynthesis</keyword>
<keyword id="KW-0547">Nucleotide-binding</keyword>
<keyword id="KW-1185">Reference proteome</keyword>
<keyword id="KW-0808">Transferase</keyword>
<evidence type="ECO:0000255" key="1">
    <source>
        <dbReference type="HAMAP-Rule" id="MF_00165"/>
    </source>
</evidence>
<reference key="1">
    <citation type="book" date="2006" name="Gram positive pathogens, 2nd edition">
        <title>The Staphylococcus aureus NCTC 8325 genome.</title>
        <editorList>
            <person name="Fischetti V."/>
            <person name="Novick R."/>
            <person name="Ferretti J."/>
            <person name="Portnoy D."/>
            <person name="Rood J."/>
        </editorList>
        <authorList>
            <person name="Gillaspy A.F."/>
            <person name="Worrell V."/>
            <person name="Orvis J."/>
            <person name="Roe B.A."/>
            <person name="Dyer D.W."/>
            <person name="Iandolo J.J."/>
        </authorList>
    </citation>
    <scope>NUCLEOTIDE SEQUENCE [LARGE SCALE GENOMIC DNA]</scope>
    <source>
        <strain>NCTC 8325 / PS 47</strain>
    </source>
</reference>
<feature type="chain" id="PRO_1000023288" description="Thymidylate kinase">
    <location>
        <begin position="1"/>
        <end position="205"/>
    </location>
</feature>
<feature type="binding site" evidence="1">
    <location>
        <begin position="9"/>
        <end position="16"/>
    </location>
    <ligand>
        <name>ATP</name>
        <dbReference type="ChEBI" id="CHEBI:30616"/>
    </ligand>
</feature>
<accession>Q2G230</accession>
<dbReference type="EC" id="2.7.4.9" evidence="1"/>
<dbReference type="EMBL" id="CP000253">
    <property type="protein sequence ID" value="ABD29606.1"/>
    <property type="molecule type" value="Genomic_DNA"/>
</dbReference>
<dbReference type="RefSeq" id="WP_001272126.1">
    <property type="nucleotide sequence ID" value="NZ_LS483365.1"/>
</dbReference>
<dbReference type="RefSeq" id="YP_499030.1">
    <property type="nucleotide sequence ID" value="NC_007795.1"/>
</dbReference>
<dbReference type="SMR" id="Q2G230"/>
<dbReference type="STRING" id="93061.SAOUHSC_00451"/>
<dbReference type="PaxDb" id="1280-SAXN108_0532"/>
<dbReference type="GeneID" id="3920311"/>
<dbReference type="GeneID" id="98344796"/>
<dbReference type="KEGG" id="sao:SAOUHSC_00451"/>
<dbReference type="PATRIC" id="fig|93061.5.peg.408"/>
<dbReference type="eggNOG" id="COG0125">
    <property type="taxonomic scope" value="Bacteria"/>
</dbReference>
<dbReference type="HOGENOM" id="CLU_049131_0_2_9"/>
<dbReference type="OrthoDB" id="9774907at2"/>
<dbReference type="PRO" id="PR:Q2G230"/>
<dbReference type="Proteomes" id="UP000008816">
    <property type="component" value="Chromosome"/>
</dbReference>
<dbReference type="GO" id="GO:0005737">
    <property type="term" value="C:cytoplasm"/>
    <property type="evidence" value="ECO:0000318"/>
    <property type="project" value="GO_Central"/>
</dbReference>
<dbReference type="GO" id="GO:0005829">
    <property type="term" value="C:cytosol"/>
    <property type="evidence" value="ECO:0000318"/>
    <property type="project" value="GO_Central"/>
</dbReference>
<dbReference type="GO" id="GO:0005524">
    <property type="term" value="F:ATP binding"/>
    <property type="evidence" value="ECO:0007669"/>
    <property type="project" value="UniProtKB-UniRule"/>
</dbReference>
<dbReference type="GO" id="GO:0004798">
    <property type="term" value="F:dTMP kinase activity"/>
    <property type="evidence" value="ECO:0000318"/>
    <property type="project" value="GO_Central"/>
</dbReference>
<dbReference type="GO" id="GO:0006233">
    <property type="term" value="P:dTDP biosynthetic process"/>
    <property type="evidence" value="ECO:0000318"/>
    <property type="project" value="GO_Central"/>
</dbReference>
<dbReference type="GO" id="GO:0006235">
    <property type="term" value="P:dTTP biosynthetic process"/>
    <property type="evidence" value="ECO:0000318"/>
    <property type="project" value="GO_Central"/>
</dbReference>
<dbReference type="GO" id="GO:0006227">
    <property type="term" value="P:dUDP biosynthetic process"/>
    <property type="evidence" value="ECO:0000318"/>
    <property type="project" value="GO_Central"/>
</dbReference>
<dbReference type="CDD" id="cd01672">
    <property type="entry name" value="TMPK"/>
    <property type="match status" value="1"/>
</dbReference>
<dbReference type="FunFam" id="3.40.50.300:FF:000225">
    <property type="entry name" value="Thymidylate kinase"/>
    <property type="match status" value="1"/>
</dbReference>
<dbReference type="Gene3D" id="3.40.50.300">
    <property type="entry name" value="P-loop containing nucleotide triphosphate hydrolases"/>
    <property type="match status" value="1"/>
</dbReference>
<dbReference type="HAMAP" id="MF_00165">
    <property type="entry name" value="Thymidylate_kinase"/>
    <property type="match status" value="1"/>
</dbReference>
<dbReference type="InterPro" id="IPR027417">
    <property type="entry name" value="P-loop_NTPase"/>
</dbReference>
<dbReference type="InterPro" id="IPR039430">
    <property type="entry name" value="Thymidylate_kin-like_dom"/>
</dbReference>
<dbReference type="InterPro" id="IPR018095">
    <property type="entry name" value="Thymidylate_kin_CS"/>
</dbReference>
<dbReference type="InterPro" id="IPR018094">
    <property type="entry name" value="Thymidylate_kinase"/>
</dbReference>
<dbReference type="NCBIfam" id="TIGR00041">
    <property type="entry name" value="DTMP_kinase"/>
    <property type="match status" value="1"/>
</dbReference>
<dbReference type="PANTHER" id="PTHR10344">
    <property type="entry name" value="THYMIDYLATE KINASE"/>
    <property type="match status" value="1"/>
</dbReference>
<dbReference type="PANTHER" id="PTHR10344:SF4">
    <property type="entry name" value="UMP-CMP KINASE 2, MITOCHONDRIAL"/>
    <property type="match status" value="1"/>
</dbReference>
<dbReference type="Pfam" id="PF02223">
    <property type="entry name" value="Thymidylate_kin"/>
    <property type="match status" value="1"/>
</dbReference>
<dbReference type="SUPFAM" id="SSF52540">
    <property type="entry name" value="P-loop containing nucleoside triphosphate hydrolases"/>
    <property type="match status" value="1"/>
</dbReference>
<dbReference type="PROSITE" id="PS01331">
    <property type="entry name" value="THYMIDYLATE_KINASE"/>
    <property type="match status" value="1"/>
</dbReference>
<proteinExistence type="inferred from homology"/>
<protein>
    <recommendedName>
        <fullName evidence="1">Thymidylate kinase</fullName>
        <ecNumber evidence="1">2.7.4.9</ecNumber>
    </recommendedName>
    <alternativeName>
        <fullName evidence="1">dTMP kinase</fullName>
    </alternativeName>
</protein>
<organism>
    <name type="scientific">Staphylococcus aureus (strain NCTC 8325 / PS 47)</name>
    <dbReference type="NCBI Taxonomy" id="93061"/>
    <lineage>
        <taxon>Bacteria</taxon>
        <taxon>Bacillati</taxon>
        <taxon>Bacillota</taxon>
        <taxon>Bacilli</taxon>
        <taxon>Bacillales</taxon>
        <taxon>Staphylococcaceae</taxon>
        <taxon>Staphylococcus</taxon>
    </lineage>
</organism>